<organism>
    <name type="scientific">Arabidopsis thaliana</name>
    <name type="common">Mouse-ear cress</name>
    <dbReference type="NCBI Taxonomy" id="3702"/>
    <lineage>
        <taxon>Eukaryota</taxon>
        <taxon>Viridiplantae</taxon>
        <taxon>Streptophyta</taxon>
        <taxon>Embryophyta</taxon>
        <taxon>Tracheophyta</taxon>
        <taxon>Spermatophyta</taxon>
        <taxon>Magnoliopsida</taxon>
        <taxon>eudicotyledons</taxon>
        <taxon>Gunneridae</taxon>
        <taxon>Pentapetalae</taxon>
        <taxon>rosids</taxon>
        <taxon>malvids</taxon>
        <taxon>Brassicales</taxon>
        <taxon>Brassicaceae</taxon>
        <taxon>Camelineae</taxon>
        <taxon>Arabidopsis</taxon>
    </lineage>
</organism>
<comment type="function">
    <text evidence="4 5">Serine/threonine protein kinase which may function as an adapter protein for BRL2 (PubMed:19000166). Required during vascular development for the establishment of vein pattern in foliar organs (PubMed:19000166). Mediates MSSP1/TMT1 phosphorylation and activation to enhance its carrier activity and consequently vacuolar sugar accumulation, particularly in response to cold (PubMed:21838775).</text>
</comment>
<comment type="catalytic activity">
    <reaction evidence="4 5">
        <text>L-seryl-[protein] + ATP = O-phospho-L-seryl-[protein] + ADP + H(+)</text>
        <dbReference type="Rhea" id="RHEA:17989"/>
        <dbReference type="Rhea" id="RHEA-COMP:9863"/>
        <dbReference type="Rhea" id="RHEA-COMP:11604"/>
        <dbReference type="ChEBI" id="CHEBI:15378"/>
        <dbReference type="ChEBI" id="CHEBI:29999"/>
        <dbReference type="ChEBI" id="CHEBI:30616"/>
        <dbReference type="ChEBI" id="CHEBI:83421"/>
        <dbReference type="ChEBI" id="CHEBI:456216"/>
        <dbReference type="EC" id="2.7.11.1"/>
    </reaction>
</comment>
<comment type="catalytic activity">
    <reaction evidence="4 5">
        <text>L-threonyl-[protein] + ATP = O-phospho-L-threonyl-[protein] + ADP + H(+)</text>
        <dbReference type="Rhea" id="RHEA:46608"/>
        <dbReference type="Rhea" id="RHEA-COMP:11060"/>
        <dbReference type="Rhea" id="RHEA-COMP:11605"/>
        <dbReference type="ChEBI" id="CHEBI:15378"/>
        <dbReference type="ChEBI" id="CHEBI:30013"/>
        <dbReference type="ChEBI" id="CHEBI:30616"/>
        <dbReference type="ChEBI" id="CHEBI:61977"/>
        <dbReference type="ChEBI" id="CHEBI:456216"/>
        <dbReference type="EC" id="2.7.11.1"/>
    </reaction>
</comment>
<comment type="subunit">
    <text evidence="4 5">Interacts with BRL2 (PubMed:19000166). Binds to MSSP1/TMT1 at the tonoplast (PubMed:21838775).</text>
</comment>
<comment type="interaction">
    <interactant intactId="EBI-2292778">
        <id>Q9XI87</id>
    </interactant>
    <interactant intactId="EBI-2292728">
        <id>Q9ZPS9</id>
        <label>BRL2</label>
    </interactant>
    <organismsDiffer>false</organismsDiffer>
    <experiments>2</experiments>
</comment>
<comment type="subcellular location">
    <subcellularLocation>
        <location evidence="5">Vacuole</location>
    </subcellularLocation>
</comment>
<comment type="tissue specificity">
    <text evidence="4 5">Restricted to mature vascular cells (PubMed:19000166). Mostly expressed in mature leaves and seeds, and, to a lower level, in seedlings, young leaves, flowers and siliques (PubMed:21838775).</text>
</comment>
<comment type="induction">
    <text evidence="4 5">Induced by auxin (e.g. IAA) (PubMed:19000166). Accumulates in response to salt (NaCl) (PubMed:21838775).</text>
</comment>
<comment type="PTM">
    <text evidence="5">Phosphorylated.</text>
</comment>
<comment type="disruption phenotype">
    <text evidence="4 5">Reduced sensitivity to auxin (e.g. 2,4-D and NPA) and brassinosteroids (BRs) associated with altered vein pattern in foliar organs (PubMed:19000166). Decreased vacuolar sugar import associated with reduced fresh weight when grown on high glucose containing medium or in response to cold stress (PubMed:21838775). Altered intracellular sugar compartmentation due to altered regulation of MSSP1/TMT1 (PubMed:21838775).</text>
</comment>
<comment type="similarity">
    <text evidence="2">Belongs to the protein kinase superfamily. Ser/Thr protein kinase family.</text>
</comment>
<comment type="sequence caution" evidence="7">
    <conflict type="erroneous gene model prediction">
        <sequence resource="EMBL-CDS" id="AAF79405"/>
    </conflict>
</comment>
<gene>
    <name evidence="6" type="primary">VIK</name>
    <name evidence="9" type="ordered locus">At1g14000</name>
    <name evidence="11" type="ORF">F16A14.22</name>
    <name evidence="10" type="ORF">F7A19.9</name>
</gene>
<protein>
    <recommendedName>
        <fullName evidence="8">Serine/threonine-protein kinase VIK</fullName>
        <ecNumber evidence="2 4 5">2.7.11.1</ecNumber>
    </recommendedName>
    <alternativeName>
        <fullName evidence="6">VH1-interacting kinase</fullName>
    </alternativeName>
</protein>
<dbReference type="EC" id="2.7.11.1" evidence="2 4 5"/>
<dbReference type="EMBL" id="AC007576">
    <property type="protein sequence ID" value="AAD39286.1"/>
    <property type="molecule type" value="Genomic_DNA"/>
</dbReference>
<dbReference type="EMBL" id="AC068197">
    <property type="protein sequence ID" value="AAF79405.1"/>
    <property type="status" value="ALT_SEQ"/>
    <property type="molecule type" value="Genomic_DNA"/>
</dbReference>
<dbReference type="EMBL" id="CP002684">
    <property type="protein sequence ID" value="AEE29097.1"/>
    <property type="molecule type" value="Genomic_DNA"/>
</dbReference>
<dbReference type="EMBL" id="AY075653">
    <property type="protein sequence ID" value="AAL77660.1"/>
    <property type="molecule type" value="mRNA"/>
</dbReference>
<dbReference type="EMBL" id="BT026491">
    <property type="protein sequence ID" value="ABH04598.1"/>
    <property type="molecule type" value="mRNA"/>
</dbReference>
<dbReference type="EMBL" id="AK220869">
    <property type="protein sequence ID" value="BAD94246.1"/>
    <property type="molecule type" value="mRNA"/>
</dbReference>
<dbReference type="PIR" id="C86273">
    <property type="entry name" value="C86273"/>
</dbReference>
<dbReference type="RefSeq" id="NP_172853.1">
    <property type="nucleotide sequence ID" value="NM_101266.4"/>
</dbReference>
<dbReference type="SMR" id="Q9XI87"/>
<dbReference type="FunCoup" id="Q9XI87">
    <property type="interactions" value="2648"/>
</dbReference>
<dbReference type="IntAct" id="Q9XI87">
    <property type="interactions" value="1"/>
</dbReference>
<dbReference type="STRING" id="3702.Q9XI87"/>
<dbReference type="iPTMnet" id="Q9XI87"/>
<dbReference type="PaxDb" id="3702-AT1G14000.1"/>
<dbReference type="ProteomicsDB" id="187249"/>
<dbReference type="EnsemblPlants" id="AT1G14000.1">
    <property type="protein sequence ID" value="AT1G14000.1"/>
    <property type="gene ID" value="AT1G14000"/>
</dbReference>
<dbReference type="GeneID" id="837960"/>
<dbReference type="Gramene" id="AT1G14000.1">
    <property type="protein sequence ID" value="AT1G14000.1"/>
    <property type="gene ID" value="AT1G14000"/>
</dbReference>
<dbReference type="KEGG" id="ath:AT1G14000"/>
<dbReference type="Araport" id="AT1G14000"/>
<dbReference type="TAIR" id="AT1G14000">
    <property type="gene designation" value="VIK"/>
</dbReference>
<dbReference type="eggNOG" id="KOG0192">
    <property type="taxonomic scope" value="Eukaryota"/>
</dbReference>
<dbReference type="HOGENOM" id="CLU_000288_7_35_1"/>
<dbReference type="InParanoid" id="Q9XI87"/>
<dbReference type="OMA" id="CWSGDIH"/>
<dbReference type="OrthoDB" id="4062651at2759"/>
<dbReference type="PRO" id="PR:Q9XI87"/>
<dbReference type="Proteomes" id="UP000006548">
    <property type="component" value="Chromosome 1"/>
</dbReference>
<dbReference type="ExpressionAtlas" id="Q9XI87">
    <property type="expression patterns" value="baseline and differential"/>
</dbReference>
<dbReference type="GO" id="GO:0005576">
    <property type="term" value="C:extracellular region"/>
    <property type="evidence" value="ECO:0007005"/>
    <property type="project" value="TAIR"/>
</dbReference>
<dbReference type="GO" id="GO:0000325">
    <property type="term" value="C:plant-type vacuole"/>
    <property type="evidence" value="ECO:0000314"/>
    <property type="project" value="UniProtKB"/>
</dbReference>
<dbReference type="GO" id="GO:0005524">
    <property type="term" value="F:ATP binding"/>
    <property type="evidence" value="ECO:0007669"/>
    <property type="project" value="UniProtKB-KW"/>
</dbReference>
<dbReference type="GO" id="GO:0004709">
    <property type="term" value="F:MAP kinase kinase kinase activity"/>
    <property type="evidence" value="ECO:0000314"/>
    <property type="project" value="UniProtKB"/>
</dbReference>
<dbReference type="GO" id="GO:0004712">
    <property type="term" value="F:protein serine/threonine/tyrosine kinase activity"/>
    <property type="evidence" value="ECO:0000250"/>
    <property type="project" value="TAIR"/>
</dbReference>
<dbReference type="GO" id="GO:0009734">
    <property type="term" value="P:auxin-activated signaling pathway"/>
    <property type="evidence" value="ECO:0000315"/>
    <property type="project" value="TAIR"/>
</dbReference>
<dbReference type="GO" id="GO:0009742">
    <property type="term" value="P:brassinosteroid mediated signaling pathway"/>
    <property type="evidence" value="ECO:0000315"/>
    <property type="project" value="TAIR"/>
</dbReference>
<dbReference type="GO" id="GO:0071333">
    <property type="term" value="P:cellular response to glucose stimulus"/>
    <property type="evidence" value="ECO:0000315"/>
    <property type="project" value="UniProtKB"/>
</dbReference>
<dbReference type="GO" id="GO:0010305">
    <property type="term" value="P:leaf vascular tissue pattern formation"/>
    <property type="evidence" value="ECO:0000315"/>
    <property type="project" value="TAIR"/>
</dbReference>
<dbReference type="GO" id="GO:0010828">
    <property type="term" value="P:positive regulation of D-glucose transmembrane transport"/>
    <property type="evidence" value="ECO:0000315"/>
    <property type="project" value="UniProtKB"/>
</dbReference>
<dbReference type="GO" id="GO:0009733">
    <property type="term" value="P:response to auxin"/>
    <property type="evidence" value="ECO:0000270"/>
    <property type="project" value="UniProtKB"/>
</dbReference>
<dbReference type="GO" id="GO:1902074">
    <property type="term" value="P:response to salt"/>
    <property type="evidence" value="ECO:0000270"/>
    <property type="project" value="UniProtKB"/>
</dbReference>
<dbReference type="CDD" id="cd13999">
    <property type="entry name" value="STKc_MAP3K-like"/>
    <property type="match status" value="1"/>
</dbReference>
<dbReference type="FunFam" id="1.10.510.10:FF:000355">
    <property type="entry name" value="Integrin-linked protein kinase family"/>
    <property type="match status" value="1"/>
</dbReference>
<dbReference type="FunFam" id="3.30.200.20:FF:000180">
    <property type="entry name" value="serine/threonine-protein kinase STY46-like"/>
    <property type="match status" value="1"/>
</dbReference>
<dbReference type="FunFam" id="1.25.40.20:FF:000312">
    <property type="entry name" value="serine/threonine-protein kinase STY8"/>
    <property type="match status" value="1"/>
</dbReference>
<dbReference type="Gene3D" id="1.25.40.20">
    <property type="entry name" value="Ankyrin repeat-containing domain"/>
    <property type="match status" value="1"/>
</dbReference>
<dbReference type="Gene3D" id="3.30.200.20">
    <property type="entry name" value="Phosphorylase Kinase, domain 1"/>
    <property type="match status" value="1"/>
</dbReference>
<dbReference type="Gene3D" id="1.10.510.10">
    <property type="entry name" value="Transferase(Phosphotransferase) domain 1"/>
    <property type="match status" value="1"/>
</dbReference>
<dbReference type="InterPro" id="IPR002110">
    <property type="entry name" value="Ankyrin_rpt"/>
</dbReference>
<dbReference type="InterPro" id="IPR036770">
    <property type="entry name" value="Ankyrin_rpt-contain_sf"/>
</dbReference>
<dbReference type="InterPro" id="IPR011009">
    <property type="entry name" value="Kinase-like_dom_sf"/>
</dbReference>
<dbReference type="InterPro" id="IPR000719">
    <property type="entry name" value="Prot_kinase_dom"/>
</dbReference>
<dbReference type="InterPro" id="IPR017441">
    <property type="entry name" value="Protein_kinase_ATP_BS"/>
</dbReference>
<dbReference type="InterPro" id="IPR001245">
    <property type="entry name" value="Ser-Thr/Tyr_kinase_cat_dom"/>
</dbReference>
<dbReference type="InterPro" id="IPR008271">
    <property type="entry name" value="Ser/Thr_kinase_AS"/>
</dbReference>
<dbReference type="InterPro" id="IPR051681">
    <property type="entry name" value="Ser/Thr_Kinases-Pseudokinases"/>
</dbReference>
<dbReference type="PANTHER" id="PTHR44329">
    <property type="entry name" value="SERINE/THREONINE-PROTEIN KINASE TNNI3K-RELATED"/>
    <property type="match status" value="1"/>
</dbReference>
<dbReference type="PANTHER" id="PTHR44329:SF289">
    <property type="entry name" value="SERINE_THREONINE-PROTEIN KINASE VIK"/>
    <property type="match status" value="1"/>
</dbReference>
<dbReference type="Pfam" id="PF12796">
    <property type="entry name" value="Ank_2"/>
    <property type="match status" value="1"/>
</dbReference>
<dbReference type="Pfam" id="PF07714">
    <property type="entry name" value="PK_Tyr_Ser-Thr"/>
    <property type="match status" value="1"/>
</dbReference>
<dbReference type="PIRSF" id="PIRSF000654">
    <property type="entry name" value="Integrin-linked_kinase"/>
    <property type="match status" value="1"/>
</dbReference>
<dbReference type="PRINTS" id="PR00109">
    <property type="entry name" value="TYRKINASE"/>
</dbReference>
<dbReference type="SMART" id="SM00248">
    <property type="entry name" value="ANK"/>
    <property type="match status" value="1"/>
</dbReference>
<dbReference type="SMART" id="SM00220">
    <property type="entry name" value="S_TKc"/>
    <property type="match status" value="1"/>
</dbReference>
<dbReference type="SUPFAM" id="SSF48403">
    <property type="entry name" value="Ankyrin repeat"/>
    <property type="match status" value="1"/>
</dbReference>
<dbReference type="SUPFAM" id="SSF56112">
    <property type="entry name" value="Protein kinase-like (PK-like)"/>
    <property type="match status" value="1"/>
</dbReference>
<dbReference type="PROSITE" id="PS50297">
    <property type="entry name" value="ANK_REP_REGION"/>
    <property type="match status" value="1"/>
</dbReference>
<dbReference type="PROSITE" id="PS50088">
    <property type="entry name" value="ANK_REPEAT"/>
    <property type="match status" value="1"/>
</dbReference>
<dbReference type="PROSITE" id="PS00107">
    <property type="entry name" value="PROTEIN_KINASE_ATP"/>
    <property type="match status" value="1"/>
</dbReference>
<dbReference type="PROSITE" id="PS50011">
    <property type="entry name" value="PROTEIN_KINASE_DOM"/>
    <property type="match status" value="1"/>
</dbReference>
<dbReference type="PROSITE" id="PS00108">
    <property type="entry name" value="PROTEIN_KINASE_ST"/>
    <property type="match status" value="1"/>
</dbReference>
<name>VIK_ARATH</name>
<proteinExistence type="evidence at protein level"/>
<sequence>MSSDSPAAGDGGEQAAAGTSVPSPSYDKQKEKARVSRTSLILWHAHQNDAAAVRKLLEEDPTLVHARDYDKRTPLHVASLHGWIDVVKCLLEFGADVNAQDRWKNTPLADAEGARKQKMIELLKSHGGLSYGQNGSHFEPKPVPPPIPKKCDWEIEPAELDFSNAAMIGKGSFGEIVKAYWRGTPVAVKRILPSLSDDRLVIQDFRHEVDLLVKLRHPNIVQFLGAVTERKPLMLITEYLRGGDLHQYLKEKGGLTPTTAVNFALDIARGMTYLHNEPNVIIHRDLKPRNVLLVNSSADHLKVGDFGLSKLIKVQNSHDVYKMTGETGSYRYMAPEVFKHRRYDKKVDVFSFAMILYEMLEGEPPFANHEPYEAAKHVSDGHRPTFRSKGCTPDLRELIVKCWDADMNQRPSFLDILKRLEKIKETLPSDHHWGLFTS</sequence>
<feature type="chain" id="PRO_0000456810" description="Serine/threonine-protein kinase VIK">
    <location>
        <begin position="1"/>
        <end position="438"/>
    </location>
</feature>
<feature type="repeat" description="ANK 1" evidence="1">
    <location>
        <begin position="36"/>
        <end position="65"/>
    </location>
</feature>
<feature type="repeat" description="ANK 2" evidence="1">
    <location>
        <begin position="70"/>
        <end position="99"/>
    </location>
</feature>
<feature type="repeat" description="ANK 3" evidence="1">
    <location>
        <begin position="103"/>
        <end position="133"/>
    </location>
</feature>
<feature type="domain" description="Protein kinase" evidence="2">
    <location>
        <begin position="162"/>
        <end position="427"/>
    </location>
</feature>
<feature type="region of interest" description="Disordered" evidence="3">
    <location>
        <begin position="1"/>
        <end position="31"/>
    </location>
</feature>
<feature type="active site" description="Proton acceptor" evidence="2">
    <location>
        <position position="285"/>
    </location>
</feature>
<feature type="binding site" evidence="2">
    <location>
        <begin position="168"/>
        <end position="176"/>
    </location>
    <ligand>
        <name>ATP</name>
        <dbReference type="ChEBI" id="CHEBI:30616"/>
    </ligand>
</feature>
<feature type="binding site" evidence="2">
    <location>
        <position position="189"/>
    </location>
    <ligand>
        <name>ATP</name>
        <dbReference type="ChEBI" id="CHEBI:30616"/>
    </ligand>
</feature>
<feature type="sequence conflict" description="In Ref. 3; AAL77660." evidence="7" ref="3">
    <original>A</original>
    <variation>V</variation>
    <location>
        <position position="17"/>
    </location>
</feature>
<keyword id="KW-0040">ANK repeat</keyword>
<keyword id="KW-0067">ATP-binding</keyword>
<keyword id="KW-0418">Kinase</keyword>
<keyword id="KW-0547">Nucleotide-binding</keyword>
<keyword id="KW-0597">Phosphoprotein</keyword>
<keyword id="KW-1185">Reference proteome</keyword>
<keyword id="KW-0677">Repeat</keyword>
<keyword id="KW-0723">Serine/threonine-protein kinase</keyword>
<keyword id="KW-0808">Transferase</keyword>
<keyword id="KW-0926">Vacuole</keyword>
<evidence type="ECO:0000255" key="1"/>
<evidence type="ECO:0000255" key="2">
    <source>
        <dbReference type="PROSITE-ProRule" id="PRU00159"/>
    </source>
</evidence>
<evidence type="ECO:0000256" key="3">
    <source>
        <dbReference type="SAM" id="MobiDB-lite"/>
    </source>
</evidence>
<evidence type="ECO:0000269" key="4">
    <source>
    </source>
</evidence>
<evidence type="ECO:0000269" key="5">
    <source>
    </source>
</evidence>
<evidence type="ECO:0000303" key="6">
    <source>
    </source>
</evidence>
<evidence type="ECO:0000305" key="7"/>
<evidence type="ECO:0000305" key="8">
    <source>
    </source>
</evidence>
<evidence type="ECO:0000312" key="9">
    <source>
        <dbReference type="Araport" id="AT1G14000"/>
    </source>
</evidence>
<evidence type="ECO:0000312" key="10">
    <source>
        <dbReference type="EMBL" id="AAD39286.1"/>
    </source>
</evidence>
<evidence type="ECO:0000312" key="11">
    <source>
        <dbReference type="EMBL" id="AAF79405.1"/>
    </source>
</evidence>
<reference key="1">
    <citation type="journal article" date="2000" name="Nature">
        <title>Sequence and analysis of chromosome 1 of the plant Arabidopsis thaliana.</title>
        <authorList>
            <person name="Theologis A."/>
            <person name="Ecker J.R."/>
            <person name="Palm C.J."/>
            <person name="Federspiel N.A."/>
            <person name="Kaul S."/>
            <person name="White O."/>
            <person name="Alonso J."/>
            <person name="Altafi H."/>
            <person name="Araujo R."/>
            <person name="Bowman C.L."/>
            <person name="Brooks S.Y."/>
            <person name="Buehler E."/>
            <person name="Chan A."/>
            <person name="Chao Q."/>
            <person name="Chen H."/>
            <person name="Cheuk R.F."/>
            <person name="Chin C.W."/>
            <person name="Chung M.K."/>
            <person name="Conn L."/>
            <person name="Conway A.B."/>
            <person name="Conway A.R."/>
            <person name="Creasy T.H."/>
            <person name="Dewar K."/>
            <person name="Dunn P."/>
            <person name="Etgu P."/>
            <person name="Feldblyum T.V."/>
            <person name="Feng J.-D."/>
            <person name="Fong B."/>
            <person name="Fujii C.Y."/>
            <person name="Gill J.E."/>
            <person name="Goldsmith A.D."/>
            <person name="Haas B."/>
            <person name="Hansen N.F."/>
            <person name="Hughes B."/>
            <person name="Huizar L."/>
            <person name="Hunter J.L."/>
            <person name="Jenkins J."/>
            <person name="Johnson-Hopson C."/>
            <person name="Khan S."/>
            <person name="Khaykin E."/>
            <person name="Kim C.J."/>
            <person name="Koo H.L."/>
            <person name="Kremenetskaia I."/>
            <person name="Kurtz D.B."/>
            <person name="Kwan A."/>
            <person name="Lam B."/>
            <person name="Langin-Hooper S."/>
            <person name="Lee A."/>
            <person name="Lee J.M."/>
            <person name="Lenz C.A."/>
            <person name="Li J.H."/>
            <person name="Li Y.-P."/>
            <person name="Lin X."/>
            <person name="Liu S.X."/>
            <person name="Liu Z.A."/>
            <person name="Luros J.S."/>
            <person name="Maiti R."/>
            <person name="Marziali A."/>
            <person name="Militscher J."/>
            <person name="Miranda M."/>
            <person name="Nguyen M."/>
            <person name="Nierman W.C."/>
            <person name="Osborne B.I."/>
            <person name="Pai G."/>
            <person name="Peterson J."/>
            <person name="Pham P.K."/>
            <person name="Rizzo M."/>
            <person name="Rooney T."/>
            <person name="Rowley D."/>
            <person name="Sakano H."/>
            <person name="Salzberg S.L."/>
            <person name="Schwartz J.R."/>
            <person name="Shinn P."/>
            <person name="Southwick A.M."/>
            <person name="Sun H."/>
            <person name="Tallon L.J."/>
            <person name="Tambunga G."/>
            <person name="Toriumi M.J."/>
            <person name="Town C.D."/>
            <person name="Utterback T."/>
            <person name="Van Aken S."/>
            <person name="Vaysberg M."/>
            <person name="Vysotskaia V.S."/>
            <person name="Walker M."/>
            <person name="Wu D."/>
            <person name="Yu G."/>
            <person name="Fraser C.M."/>
            <person name="Venter J.C."/>
            <person name="Davis R.W."/>
        </authorList>
    </citation>
    <scope>NUCLEOTIDE SEQUENCE [LARGE SCALE GENOMIC DNA]</scope>
    <source>
        <strain>cv. Columbia</strain>
    </source>
</reference>
<reference key="2">
    <citation type="journal article" date="2017" name="Plant J.">
        <title>Araport11: a complete reannotation of the Arabidopsis thaliana reference genome.</title>
        <authorList>
            <person name="Cheng C.Y."/>
            <person name="Krishnakumar V."/>
            <person name="Chan A.P."/>
            <person name="Thibaud-Nissen F."/>
            <person name="Schobel S."/>
            <person name="Town C.D."/>
        </authorList>
    </citation>
    <scope>GENOME REANNOTATION</scope>
    <source>
        <strain>cv. Columbia</strain>
    </source>
</reference>
<reference key="3">
    <citation type="journal article" date="2003" name="Science">
        <title>Empirical analysis of transcriptional activity in the Arabidopsis genome.</title>
        <authorList>
            <person name="Yamada K."/>
            <person name="Lim J."/>
            <person name="Dale J.M."/>
            <person name="Chen H."/>
            <person name="Shinn P."/>
            <person name="Palm C.J."/>
            <person name="Southwick A.M."/>
            <person name="Wu H.C."/>
            <person name="Kim C.J."/>
            <person name="Nguyen M."/>
            <person name="Pham P.K."/>
            <person name="Cheuk R.F."/>
            <person name="Karlin-Newmann G."/>
            <person name="Liu S.X."/>
            <person name="Lam B."/>
            <person name="Sakano H."/>
            <person name="Wu T."/>
            <person name="Yu G."/>
            <person name="Miranda M."/>
            <person name="Quach H.L."/>
            <person name="Tripp M."/>
            <person name="Chang C.H."/>
            <person name="Lee J.M."/>
            <person name="Toriumi M.J."/>
            <person name="Chan M.M."/>
            <person name="Tang C.C."/>
            <person name="Onodera C.S."/>
            <person name="Deng J.M."/>
            <person name="Akiyama K."/>
            <person name="Ansari Y."/>
            <person name="Arakawa T."/>
            <person name="Banh J."/>
            <person name="Banno F."/>
            <person name="Bowser L."/>
            <person name="Brooks S.Y."/>
            <person name="Carninci P."/>
            <person name="Chao Q."/>
            <person name="Choy N."/>
            <person name="Enju A."/>
            <person name="Goldsmith A.D."/>
            <person name="Gurjal M."/>
            <person name="Hansen N.F."/>
            <person name="Hayashizaki Y."/>
            <person name="Johnson-Hopson C."/>
            <person name="Hsuan V.W."/>
            <person name="Iida K."/>
            <person name="Karnes M."/>
            <person name="Khan S."/>
            <person name="Koesema E."/>
            <person name="Ishida J."/>
            <person name="Jiang P.X."/>
            <person name="Jones T."/>
            <person name="Kawai J."/>
            <person name="Kamiya A."/>
            <person name="Meyers C."/>
            <person name="Nakajima M."/>
            <person name="Narusaka M."/>
            <person name="Seki M."/>
            <person name="Sakurai T."/>
            <person name="Satou M."/>
            <person name="Tamse R."/>
            <person name="Vaysberg M."/>
            <person name="Wallender E.K."/>
            <person name="Wong C."/>
            <person name="Yamamura Y."/>
            <person name="Yuan S."/>
            <person name="Shinozaki K."/>
            <person name="Davis R.W."/>
            <person name="Theologis A."/>
            <person name="Ecker J.R."/>
        </authorList>
    </citation>
    <scope>NUCLEOTIDE SEQUENCE [LARGE SCALE MRNA]</scope>
    <source>
        <strain>cv. Columbia</strain>
    </source>
</reference>
<reference key="4">
    <citation type="submission" date="2006-08" db="EMBL/GenBank/DDBJ databases">
        <title>Arabidopsis ORF Clones.</title>
        <authorList>
            <person name="Quinitio C."/>
            <person name="Chen H."/>
            <person name="Kim C.J."/>
            <person name="Shinn P."/>
            <person name="Ecker J.R."/>
        </authorList>
    </citation>
    <scope>NUCLEOTIDE SEQUENCE [LARGE SCALE MRNA]</scope>
    <source>
        <strain>cv. Columbia</strain>
    </source>
</reference>
<reference key="5">
    <citation type="submission" date="2005-03" db="EMBL/GenBank/DDBJ databases">
        <title>Large-scale analysis of RIKEN Arabidopsis full-length (RAFL) cDNAs.</title>
        <authorList>
            <person name="Totoki Y."/>
            <person name="Seki M."/>
            <person name="Ishida J."/>
            <person name="Nakajima M."/>
            <person name="Enju A."/>
            <person name="Kamiya A."/>
            <person name="Narusaka M."/>
            <person name="Shin-i T."/>
            <person name="Nakagawa M."/>
            <person name="Sakamoto N."/>
            <person name="Oishi K."/>
            <person name="Kohara Y."/>
            <person name="Kobayashi M."/>
            <person name="Toyoda A."/>
            <person name="Sakaki Y."/>
            <person name="Sakurai T."/>
            <person name="Iida K."/>
            <person name="Akiyama K."/>
            <person name="Satou M."/>
            <person name="Toyoda T."/>
            <person name="Konagaya A."/>
            <person name="Carninci P."/>
            <person name="Kawai J."/>
            <person name="Hayashizaki Y."/>
            <person name="Shinozaki K."/>
        </authorList>
    </citation>
    <scope>NUCLEOTIDE SEQUENCE [LARGE SCALE MRNA] OF 323-438</scope>
    <source>
        <strain>cv. Columbia</strain>
    </source>
</reference>
<reference key="6">
    <citation type="journal article" date="2002" name="Trends Plant Sci.">
        <title>Mitogen-activated protein kinase cascades in plants: a new nomenclature.</title>
        <authorList>
            <consortium name="MAPK group"/>
        </authorList>
    </citation>
    <scope>GENE FAMILY</scope>
</reference>
<reference key="7">
    <citation type="journal article" date="2009" name="Plant J.">
        <title>VH1/BRL2 receptor-like kinase interacts with vascular-specific adaptor proteins VIT and VIK to influence leaf venation.</title>
        <authorList>
            <person name="Ceserani T."/>
            <person name="Trofka A."/>
            <person name="Gandotra N."/>
            <person name="Nelson T."/>
        </authorList>
    </citation>
    <scope>FUNCTION</scope>
    <scope>DISRUPTION PHENOTYPE</scope>
    <scope>CATALYTIC ACTIVITY</scope>
    <scope>INTERACTION WITH BRL2</scope>
    <scope>INDUCTION BY AUXIN</scope>
    <scope>TISSUE SPECIFICITY</scope>
</reference>
<reference key="8">
    <citation type="journal article" date="2011" name="Plant J.">
        <title>A member of the mitogen-activated protein 3-kinase family is involved in the regulation of plant vacuolar glucose uptake.</title>
        <authorList>
            <person name="Wingenter K."/>
            <person name="Trentmann O."/>
            <person name="Winschuh I."/>
            <person name="Hoermiller I.I."/>
            <person name="Heyer A.G."/>
            <person name="Reinders J."/>
            <person name="Schulz A."/>
            <person name="Geiger D."/>
            <person name="Hedrich R."/>
            <person name="Neuhaus H.E."/>
        </authorList>
    </citation>
    <scope>FUNCTION</scope>
    <scope>DISRUPTION PHENOTYPE</scope>
    <scope>CATALYTIC ACTIVITY</scope>
    <scope>INTERACTION WITH MSSP1/TMT1</scope>
    <scope>TISSUE SPECIFICITY</scope>
    <scope>INDUCTION BY SALT</scope>
    <scope>SUBCELLULAR LOCATION</scope>
</reference>
<accession>Q9XI87</accession>
<accession>Q56ZU2</accession>
<accession>Q8S9J9</accession>
<accession>Q9LMF8</accession>